<comment type="function">
    <text evidence="1">Catalyzes the anti-1,4-elimination of the C-3 phosphate and the C-6 proR hydrogen from 5-enolpyruvylshikimate-3-phosphate (EPSP) to yield chorismate, which is the branch point compound that serves as the starting substrate for the three terminal pathways of aromatic amino acid biosynthesis. This reaction introduces a second double bond into the aromatic ring system.</text>
</comment>
<comment type="catalytic activity">
    <reaction evidence="1">
        <text>5-O-(1-carboxyvinyl)-3-phosphoshikimate = chorismate + phosphate</text>
        <dbReference type="Rhea" id="RHEA:21020"/>
        <dbReference type="ChEBI" id="CHEBI:29748"/>
        <dbReference type="ChEBI" id="CHEBI:43474"/>
        <dbReference type="ChEBI" id="CHEBI:57701"/>
        <dbReference type="EC" id="4.2.3.5"/>
    </reaction>
</comment>
<comment type="cofactor">
    <cofactor evidence="1">
        <name>FMNH2</name>
        <dbReference type="ChEBI" id="CHEBI:57618"/>
    </cofactor>
    <text evidence="1">Reduced FMN (FMNH(2)).</text>
</comment>
<comment type="pathway">
    <text evidence="1">Metabolic intermediate biosynthesis; chorismate biosynthesis; chorismate from D-erythrose 4-phosphate and phosphoenolpyruvate: step 7/7.</text>
</comment>
<comment type="subunit">
    <text evidence="1">Homotetramer.</text>
</comment>
<comment type="similarity">
    <text evidence="1">Belongs to the chorismate synthase family.</text>
</comment>
<reference key="1">
    <citation type="journal article" date="2005" name="DNA Res.">
        <title>Complete genome sequence of the facultative anaerobic magnetotactic bacterium Magnetospirillum sp. strain AMB-1.</title>
        <authorList>
            <person name="Matsunaga T."/>
            <person name="Okamura Y."/>
            <person name="Fukuda Y."/>
            <person name="Wahyudi A.T."/>
            <person name="Murase Y."/>
            <person name="Takeyama H."/>
        </authorList>
    </citation>
    <scope>NUCLEOTIDE SEQUENCE [LARGE SCALE GENOMIC DNA]</scope>
    <source>
        <strain>ATCC 700264 / AMB-1</strain>
    </source>
</reference>
<accession>Q2W6Y1</accession>
<name>AROC_PARM1</name>
<evidence type="ECO:0000255" key="1">
    <source>
        <dbReference type="HAMAP-Rule" id="MF_00300"/>
    </source>
</evidence>
<sequence length="362" mass="38547">MSGNGFGHLFRFTTFGESHGPAIGCVVDGVPARIPLTEADIQHYLDQRKPGQNRFTTQRREPDEVKILSGVFEGLTTGTSIGLLIENTDQRSKDYGEIKDTYRPGHADWVYQQKYGIRDYRGGGRSSARETAMRVAAGAIARKVLDALAPGLSIRGAMVQMGPHAIDRSRWDWAELGNNPFWCPDGAAAKSWEEYLDTIRKSGSSIGGVVEVVASGVPVGLGAPVYDKLDADLAKAMMSINAVKGVEIGDGFAAAALSGEENADEMRMGNDGQVGFLSNHAGGILGGISTGQDVVVRLAVKPTSSILTPKQSVDAKGNNVEVSTKGRHDPCVAIRAVPVAEAMMACTLADHLLRSLAQPRLS</sequence>
<protein>
    <recommendedName>
        <fullName evidence="1">Chorismate synthase</fullName>
        <shortName evidence="1">CS</shortName>
        <ecNumber evidence="1">4.2.3.5</ecNumber>
    </recommendedName>
    <alternativeName>
        <fullName evidence="1">5-enolpyruvylshikimate-3-phosphate phospholyase</fullName>
    </alternativeName>
</protein>
<dbReference type="EC" id="4.2.3.5" evidence="1"/>
<dbReference type="EMBL" id="AP007255">
    <property type="protein sequence ID" value="BAE50394.1"/>
    <property type="molecule type" value="Genomic_DNA"/>
</dbReference>
<dbReference type="RefSeq" id="WP_011384000.1">
    <property type="nucleotide sequence ID" value="NC_007626.1"/>
</dbReference>
<dbReference type="SMR" id="Q2W6Y1"/>
<dbReference type="STRING" id="342108.amb1590"/>
<dbReference type="KEGG" id="mag:amb1590"/>
<dbReference type="HOGENOM" id="CLU_034547_0_0_5"/>
<dbReference type="OrthoDB" id="9771806at2"/>
<dbReference type="UniPathway" id="UPA00053">
    <property type="reaction ID" value="UER00090"/>
</dbReference>
<dbReference type="Proteomes" id="UP000007058">
    <property type="component" value="Chromosome"/>
</dbReference>
<dbReference type="GO" id="GO:0005829">
    <property type="term" value="C:cytosol"/>
    <property type="evidence" value="ECO:0007669"/>
    <property type="project" value="TreeGrafter"/>
</dbReference>
<dbReference type="GO" id="GO:0004107">
    <property type="term" value="F:chorismate synthase activity"/>
    <property type="evidence" value="ECO:0007669"/>
    <property type="project" value="UniProtKB-UniRule"/>
</dbReference>
<dbReference type="GO" id="GO:0010181">
    <property type="term" value="F:FMN binding"/>
    <property type="evidence" value="ECO:0007669"/>
    <property type="project" value="TreeGrafter"/>
</dbReference>
<dbReference type="GO" id="GO:0008652">
    <property type="term" value="P:amino acid biosynthetic process"/>
    <property type="evidence" value="ECO:0007669"/>
    <property type="project" value="UniProtKB-KW"/>
</dbReference>
<dbReference type="GO" id="GO:0009073">
    <property type="term" value="P:aromatic amino acid family biosynthetic process"/>
    <property type="evidence" value="ECO:0007669"/>
    <property type="project" value="UniProtKB-KW"/>
</dbReference>
<dbReference type="GO" id="GO:0009423">
    <property type="term" value="P:chorismate biosynthetic process"/>
    <property type="evidence" value="ECO:0007669"/>
    <property type="project" value="UniProtKB-UniRule"/>
</dbReference>
<dbReference type="CDD" id="cd07304">
    <property type="entry name" value="Chorismate_synthase"/>
    <property type="match status" value="1"/>
</dbReference>
<dbReference type="FunFam" id="3.60.150.10:FF:000002">
    <property type="entry name" value="Chorismate synthase"/>
    <property type="match status" value="1"/>
</dbReference>
<dbReference type="Gene3D" id="3.60.150.10">
    <property type="entry name" value="Chorismate synthase AroC"/>
    <property type="match status" value="1"/>
</dbReference>
<dbReference type="HAMAP" id="MF_00300">
    <property type="entry name" value="Chorismate_synth"/>
    <property type="match status" value="1"/>
</dbReference>
<dbReference type="InterPro" id="IPR000453">
    <property type="entry name" value="Chorismate_synth"/>
</dbReference>
<dbReference type="InterPro" id="IPR035904">
    <property type="entry name" value="Chorismate_synth_AroC_sf"/>
</dbReference>
<dbReference type="InterPro" id="IPR020541">
    <property type="entry name" value="Chorismate_synthase_CS"/>
</dbReference>
<dbReference type="NCBIfam" id="TIGR00033">
    <property type="entry name" value="aroC"/>
    <property type="match status" value="1"/>
</dbReference>
<dbReference type="NCBIfam" id="NF003793">
    <property type="entry name" value="PRK05382.1"/>
    <property type="match status" value="1"/>
</dbReference>
<dbReference type="PANTHER" id="PTHR21085">
    <property type="entry name" value="CHORISMATE SYNTHASE"/>
    <property type="match status" value="1"/>
</dbReference>
<dbReference type="PANTHER" id="PTHR21085:SF0">
    <property type="entry name" value="CHORISMATE SYNTHASE"/>
    <property type="match status" value="1"/>
</dbReference>
<dbReference type="Pfam" id="PF01264">
    <property type="entry name" value="Chorismate_synt"/>
    <property type="match status" value="1"/>
</dbReference>
<dbReference type="PIRSF" id="PIRSF001456">
    <property type="entry name" value="Chorismate_synth"/>
    <property type="match status" value="1"/>
</dbReference>
<dbReference type="SUPFAM" id="SSF103263">
    <property type="entry name" value="Chorismate synthase, AroC"/>
    <property type="match status" value="1"/>
</dbReference>
<dbReference type="PROSITE" id="PS00787">
    <property type="entry name" value="CHORISMATE_SYNTHASE_1"/>
    <property type="match status" value="1"/>
</dbReference>
<dbReference type="PROSITE" id="PS00788">
    <property type="entry name" value="CHORISMATE_SYNTHASE_2"/>
    <property type="match status" value="1"/>
</dbReference>
<dbReference type="PROSITE" id="PS00789">
    <property type="entry name" value="CHORISMATE_SYNTHASE_3"/>
    <property type="match status" value="1"/>
</dbReference>
<keyword id="KW-0028">Amino-acid biosynthesis</keyword>
<keyword id="KW-0057">Aromatic amino acid biosynthesis</keyword>
<keyword id="KW-0274">FAD</keyword>
<keyword id="KW-0285">Flavoprotein</keyword>
<keyword id="KW-0288">FMN</keyword>
<keyword id="KW-0456">Lyase</keyword>
<keyword id="KW-0521">NADP</keyword>
<organism>
    <name type="scientific">Paramagnetospirillum magneticum (strain ATCC 700264 / AMB-1)</name>
    <name type="common">Magnetospirillum magneticum</name>
    <dbReference type="NCBI Taxonomy" id="342108"/>
    <lineage>
        <taxon>Bacteria</taxon>
        <taxon>Pseudomonadati</taxon>
        <taxon>Pseudomonadota</taxon>
        <taxon>Alphaproteobacteria</taxon>
        <taxon>Rhodospirillales</taxon>
        <taxon>Magnetospirillaceae</taxon>
        <taxon>Paramagnetospirillum</taxon>
    </lineage>
</organism>
<feature type="chain" id="PRO_0000256300" description="Chorismate synthase">
    <location>
        <begin position="1"/>
        <end position="362"/>
    </location>
</feature>
<feature type="binding site" evidence="1">
    <location>
        <position position="48"/>
    </location>
    <ligand>
        <name>NADP(+)</name>
        <dbReference type="ChEBI" id="CHEBI:58349"/>
    </ligand>
</feature>
<feature type="binding site" evidence="1">
    <location>
        <position position="54"/>
    </location>
    <ligand>
        <name>NADP(+)</name>
        <dbReference type="ChEBI" id="CHEBI:58349"/>
    </ligand>
</feature>
<feature type="binding site" evidence="1">
    <location>
        <begin position="125"/>
        <end position="127"/>
    </location>
    <ligand>
        <name>FMN</name>
        <dbReference type="ChEBI" id="CHEBI:58210"/>
    </ligand>
</feature>
<feature type="binding site" evidence="1">
    <location>
        <begin position="241"/>
        <end position="242"/>
    </location>
    <ligand>
        <name>FMN</name>
        <dbReference type="ChEBI" id="CHEBI:58210"/>
    </ligand>
</feature>
<feature type="binding site" evidence="1">
    <location>
        <position position="286"/>
    </location>
    <ligand>
        <name>FMN</name>
        <dbReference type="ChEBI" id="CHEBI:58210"/>
    </ligand>
</feature>
<feature type="binding site" evidence="1">
    <location>
        <begin position="301"/>
        <end position="305"/>
    </location>
    <ligand>
        <name>FMN</name>
        <dbReference type="ChEBI" id="CHEBI:58210"/>
    </ligand>
</feature>
<feature type="binding site" evidence="1">
    <location>
        <position position="327"/>
    </location>
    <ligand>
        <name>FMN</name>
        <dbReference type="ChEBI" id="CHEBI:58210"/>
    </ligand>
</feature>
<proteinExistence type="inferred from homology"/>
<gene>
    <name evidence="1" type="primary">aroC</name>
    <name type="ordered locus">amb1590</name>
</gene>